<evidence type="ECO:0000255" key="1">
    <source>
        <dbReference type="HAMAP-Rule" id="MF_01210"/>
    </source>
</evidence>
<comment type="function">
    <text evidence="1">Large subunit of the glutamine-dependent carbamoyl phosphate synthetase (CPSase). CPSase catalyzes the formation of carbamoyl phosphate from the ammonia moiety of glutamine, carbonate, and phosphate donated by ATP, constituting the first step of 2 biosynthetic pathways, one leading to arginine and/or urea and the other to pyrimidine nucleotides. The large subunit (synthetase) binds the substrates ammonia (free or transferred from glutamine from the small subunit), hydrogencarbonate and ATP and carries out an ATP-coupled ligase reaction, activating hydrogencarbonate by forming carboxy phosphate which reacts with ammonia to form carbamoyl phosphate.</text>
</comment>
<comment type="catalytic activity">
    <reaction evidence="1">
        <text>hydrogencarbonate + L-glutamine + 2 ATP + H2O = carbamoyl phosphate + L-glutamate + 2 ADP + phosphate + 2 H(+)</text>
        <dbReference type="Rhea" id="RHEA:18633"/>
        <dbReference type="ChEBI" id="CHEBI:15377"/>
        <dbReference type="ChEBI" id="CHEBI:15378"/>
        <dbReference type="ChEBI" id="CHEBI:17544"/>
        <dbReference type="ChEBI" id="CHEBI:29985"/>
        <dbReference type="ChEBI" id="CHEBI:30616"/>
        <dbReference type="ChEBI" id="CHEBI:43474"/>
        <dbReference type="ChEBI" id="CHEBI:58228"/>
        <dbReference type="ChEBI" id="CHEBI:58359"/>
        <dbReference type="ChEBI" id="CHEBI:456216"/>
        <dbReference type="EC" id="6.3.5.5"/>
    </reaction>
</comment>
<comment type="catalytic activity">
    <molecule>Carbamoyl phosphate synthase large chain</molecule>
    <reaction evidence="1">
        <text>hydrogencarbonate + NH4(+) + 2 ATP = carbamoyl phosphate + 2 ADP + phosphate + 2 H(+)</text>
        <dbReference type="Rhea" id="RHEA:18029"/>
        <dbReference type="ChEBI" id="CHEBI:15378"/>
        <dbReference type="ChEBI" id="CHEBI:17544"/>
        <dbReference type="ChEBI" id="CHEBI:28938"/>
        <dbReference type="ChEBI" id="CHEBI:30616"/>
        <dbReference type="ChEBI" id="CHEBI:43474"/>
        <dbReference type="ChEBI" id="CHEBI:58228"/>
        <dbReference type="ChEBI" id="CHEBI:456216"/>
        <dbReference type="EC" id="6.3.4.16"/>
    </reaction>
</comment>
<comment type="cofactor">
    <cofactor evidence="1">
        <name>Mg(2+)</name>
        <dbReference type="ChEBI" id="CHEBI:18420"/>
    </cofactor>
    <cofactor evidence="1">
        <name>Mn(2+)</name>
        <dbReference type="ChEBI" id="CHEBI:29035"/>
    </cofactor>
    <text evidence="1">Binds 4 Mg(2+) or Mn(2+) ions per subunit.</text>
</comment>
<comment type="pathway">
    <text evidence="1">Amino-acid biosynthesis; L-arginine biosynthesis; carbamoyl phosphate from bicarbonate: step 1/1.</text>
</comment>
<comment type="pathway">
    <text evidence="1">Pyrimidine metabolism; UMP biosynthesis via de novo pathway; (S)-dihydroorotate from bicarbonate: step 1/3.</text>
</comment>
<comment type="subunit">
    <text evidence="1">Composed of two chains; the small (or glutamine) chain promotes the hydrolysis of glutamine to ammonia, which is used by the large (or ammonia) chain to synthesize carbamoyl phosphate. Tetramer of heterodimers (alpha,beta)4.</text>
</comment>
<comment type="domain">
    <text evidence="1">The large subunit is composed of 2 ATP-grasp domains that are involved in binding the 2 ATP molecules needed for carbamoyl phosphate synthesis. The N-terminal ATP-grasp domain (referred to as the carboxyphosphate synthetic component) catalyzes the ATP-dependent phosphorylation of hydrogencarbonate to carboxyphosphate and the subsequent nucleophilic attack by ammonia to form a carbamate intermediate. The C-terminal ATP-grasp domain (referred to as the carbamoyl phosphate synthetic component) then catalyzes the phosphorylation of carbamate with the second ATP to form the end product carbamoyl phosphate. The reactive and unstable enzyme intermediates are sequentially channeled from one active site to the next through the interior of the protein over a distance of at least 96 A.</text>
</comment>
<comment type="similarity">
    <text evidence="1">Belongs to the CarB family.</text>
</comment>
<organism>
    <name type="scientific">Bacillus thuringiensis subsp. konkukian (strain 97-27)</name>
    <dbReference type="NCBI Taxonomy" id="281309"/>
    <lineage>
        <taxon>Bacteria</taxon>
        <taxon>Bacillati</taxon>
        <taxon>Bacillota</taxon>
        <taxon>Bacilli</taxon>
        <taxon>Bacillales</taxon>
        <taxon>Bacillaceae</taxon>
        <taxon>Bacillus</taxon>
        <taxon>Bacillus cereus group</taxon>
    </lineage>
</organism>
<proteinExistence type="inferred from homology"/>
<keyword id="KW-0028">Amino-acid biosynthesis</keyword>
<keyword id="KW-0055">Arginine biosynthesis</keyword>
<keyword id="KW-0067">ATP-binding</keyword>
<keyword id="KW-0436">Ligase</keyword>
<keyword id="KW-0460">Magnesium</keyword>
<keyword id="KW-0464">Manganese</keyword>
<keyword id="KW-0479">Metal-binding</keyword>
<keyword id="KW-0547">Nucleotide-binding</keyword>
<keyword id="KW-0665">Pyrimidine biosynthesis</keyword>
<keyword id="KW-0677">Repeat</keyword>
<name>CARB_BACHK</name>
<feature type="chain" id="PRO_1000066341" description="Carbamoyl phosphate synthase large chain">
    <location>
        <begin position="1"/>
        <end position="1072"/>
    </location>
</feature>
<feature type="domain" description="ATP-grasp 1" evidence="1">
    <location>
        <begin position="133"/>
        <end position="327"/>
    </location>
</feature>
<feature type="domain" description="ATP-grasp 2" evidence="1">
    <location>
        <begin position="671"/>
        <end position="861"/>
    </location>
</feature>
<feature type="domain" description="MGS-like" evidence="1">
    <location>
        <begin position="930"/>
        <end position="1072"/>
    </location>
</feature>
<feature type="region of interest" description="Carboxyphosphate synthetic domain" evidence="1">
    <location>
        <begin position="1"/>
        <end position="401"/>
    </location>
</feature>
<feature type="region of interest" description="Oligomerization domain" evidence="1">
    <location>
        <begin position="402"/>
        <end position="546"/>
    </location>
</feature>
<feature type="region of interest" description="Carbamoyl phosphate synthetic domain" evidence="1">
    <location>
        <begin position="547"/>
        <end position="929"/>
    </location>
</feature>
<feature type="region of interest" description="Allosteric domain" evidence="1">
    <location>
        <begin position="930"/>
        <end position="1072"/>
    </location>
</feature>
<feature type="binding site" evidence="1">
    <location>
        <position position="129"/>
    </location>
    <ligand>
        <name>ATP</name>
        <dbReference type="ChEBI" id="CHEBI:30616"/>
        <label>1</label>
    </ligand>
</feature>
<feature type="binding site" evidence="1">
    <location>
        <position position="169"/>
    </location>
    <ligand>
        <name>ATP</name>
        <dbReference type="ChEBI" id="CHEBI:30616"/>
        <label>1</label>
    </ligand>
</feature>
<feature type="binding site" evidence="1">
    <location>
        <position position="175"/>
    </location>
    <ligand>
        <name>ATP</name>
        <dbReference type="ChEBI" id="CHEBI:30616"/>
        <label>1</label>
    </ligand>
</feature>
<feature type="binding site" evidence="1">
    <location>
        <position position="176"/>
    </location>
    <ligand>
        <name>ATP</name>
        <dbReference type="ChEBI" id="CHEBI:30616"/>
        <label>1</label>
    </ligand>
</feature>
<feature type="binding site" evidence="1">
    <location>
        <position position="208"/>
    </location>
    <ligand>
        <name>ATP</name>
        <dbReference type="ChEBI" id="CHEBI:30616"/>
        <label>1</label>
    </ligand>
</feature>
<feature type="binding site" evidence="1">
    <location>
        <position position="210"/>
    </location>
    <ligand>
        <name>ATP</name>
        <dbReference type="ChEBI" id="CHEBI:30616"/>
        <label>1</label>
    </ligand>
</feature>
<feature type="binding site" evidence="1">
    <location>
        <position position="215"/>
    </location>
    <ligand>
        <name>ATP</name>
        <dbReference type="ChEBI" id="CHEBI:30616"/>
        <label>1</label>
    </ligand>
</feature>
<feature type="binding site" evidence="1">
    <location>
        <position position="241"/>
    </location>
    <ligand>
        <name>ATP</name>
        <dbReference type="ChEBI" id="CHEBI:30616"/>
        <label>1</label>
    </ligand>
</feature>
<feature type="binding site" evidence="1">
    <location>
        <position position="242"/>
    </location>
    <ligand>
        <name>ATP</name>
        <dbReference type="ChEBI" id="CHEBI:30616"/>
        <label>1</label>
    </ligand>
</feature>
<feature type="binding site" evidence="1">
    <location>
        <position position="243"/>
    </location>
    <ligand>
        <name>ATP</name>
        <dbReference type="ChEBI" id="CHEBI:30616"/>
        <label>1</label>
    </ligand>
</feature>
<feature type="binding site" evidence="1">
    <location>
        <position position="284"/>
    </location>
    <ligand>
        <name>ATP</name>
        <dbReference type="ChEBI" id="CHEBI:30616"/>
        <label>1</label>
    </ligand>
</feature>
<feature type="binding site" evidence="1">
    <location>
        <position position="284"/>
    </location>
    <ligand>
        <name>Mg(2+)</name>
        <dbReference type="ChEBI" id="CHEBI:18420"/>
        <label>1</label>
    </ligand>
</feature>
<feature type="binding site" evidence="1">
    <location>
        <position position="284"/>
    </location>
    <ligand>
        <name>Mn(2+)</name>
        <dbReference type="ChEBI" id="CHEBI:29035"/>
        <label>1</label>
    </ligand>
</feature>
<feature type="binding site" evidence="1">
    <location>
        <position position="298"/>
    </location>
    <ligand>
        <name>ATP</name>
        <dbReference type="ChEBI" id="CHEBI:30616"/>
        <label>1</label>
    </ligand>
</feature>
<feature type="binding site" evidence="1">
    <location>
        <position position="298"/>
    </location>
    <ligand>
        <name>Mg(2+)</name>
        <dbReference type="ChEBI" id="CHEBI:18420"/>
        <label>1</label>
    </ligand>
</feature>
<feature type="binding site" evidence="1">
    <location>
        <position position="298"/>
    </location>
    <ligand>
        <name>Mg(2+)</name>
        <dbReference type="ChEBI" id="CHEBI:18420"/>
        <label>2</label>
    </ligand>
</feature>
<feature type="binding site" evidence="1">
    <location>
        <position position="298"/>
    </location>
    <ligand>
        <name>Mn(2+)</name>
        <dbReference type="ChEBI" id="CHEBI:29035"/>
        <label>1</label>
    </ligand>
</feature>
<feature type="binding site" evidence="1">
    <location>
        <position position="298"/>
    </location>
    <ligand>
        <name>Mn(2+)</name>
        <dbReference type="ChEBI" id="CHEBI:29035"/>
        <label>2</label>
    </ligand>
</feature>
<feature type="binding site" evidence="1">
    <location>
        <position position="300"/>
    </location>
    <ligand>
        <name>Mg(2+)</name>
        <dbReference type="ChEBI" id="CHEBI:18420"/>
        <label>2</label>
    </ligand>
</feature>
<feature type="binding site" evidence="1">
    <location>
        <position position="300"/>
    </location>
    <ligand>
        <name>Mn(2+)</name>
        <dbReference type="ChEBI" id="CHEBI:29035"/>
        <label>2</label>
    </ligand>
</feature>
<feature type="binding site" evidence="1">
    <location>
        <position position="707"/>
    </location>
    <ligand>
        <name>ATP</name>
        <dbReference type="ChEBI" id="CHEBI:30616"/>
        <label>2</label>
    </ligand>
</feature>
<feature type="binding site" evidence="1">
    <location>
        <position position="746"/>
    </location>
    <ligand>
        <name>ATP</name>
        <dbReference type="ChEBI" id="CHEBI:30616"/>
        <label>2</label>
    </ligand>
</feature>
<feature type="binding site" evidence="1">
    <location>
        <position position="752"/>
    </location>
    <ligand>
        <name>ATP</name>
        <dbReference type="ChEBI" id="CHEBI:30616"/>
        <label>2</label>
    </ligand>
</feature>
<feature type="binding site" evidence="1">
    <location>
        <position position="777"/>
    </location>
    <ligand>
        <name>ATP</name>
        <dbReference type="ChEBI" id="CHEBI:30616"/>
        <label>2</label>
    </ligand>
</feature>
<feature type="binding site" evidence="1">
    <location>
        <position position="778"/>
    </location>
    <ligand>
        <name>ATP</name>
        <dbReference type="ChEBI" id="CHEBI:30616"/>
        <label>2</label>
    </ligand>
</feature>
<feature type="binding site" evidence="1">
    <location>
        <position position="779"/>
    </location>
    <ligand>
        <name>ATP</name>
        <dbReference type="ChEBI" id="CHEBI:30616"/>
        <label>2</label>
    </ligand>
</feature>
<feature type="binding site" evidence="1">
    <location>
        <position position="780"/>
    </location>
    <ligand>
        <name>ATP</name>
        <dbReference type="ChEBI" id="CHEBI:30616"/>
        <label>2</label>
    </ligand>
</feature>
<feature type="binding site" evidence="1">
    <location>
        <position position="820"/>
    </location>
    <ligand>
        <name>ATP</name>
        <dbReference type="ChEBI" id="CHEBI:30616"/>
        <label>2</label>
    </ligand>
</feature>
<feature type="binding site" evidence="1">
    <location>
        <position position="820"/>
    </location>
    <ligand>
        <name>Mg(2+)</name>
        <dbReference type="ChEBI" id="CHEBI:18420"/>
        <label>3</label>
    </ligand>
</feature>
<feature type="binding site" evidence="1">
    <location>
        <position position="820"/>
    </location>
    <ligand>
        <name>Mn(2+)</name>
        <dbReference type="ChEBI" id="CHEBI:29035"/>
        <label>3</label>
    </ligand>
</feature>
<feature type="binding site" evidence="1">
    <location>
        <position position="832"/>
    </location>
    <ligand>
        <name>ATP</name>
        <dbReference type="ChEBI" id="CHEBI:30616"/>
        <label>2</label>
    </ligand>
</feature>
<feature type="binding site" evidence="1">
    <location>
        <position position="832"/>
    </location>
    <ligand>
        <name>Mg(2+)</name>
        <dbReference type="ChEBI" id="CHEBI:18420"/>
        <label>3</label>
    </ligand>
</feature>
<feature type="binding site" evidence="1">
    <location>
        <position position="832"/>
    </location>
    <ligand>
        <name>Mg(2+)</name>
        <dbReference type="ChEBI" id="CHEBI:18420"/>
        <label>4</label>
    </ligand>
</feature>
<feature type="binding site" evidence="1">
    <location>
        <position position="832"/>
    </location>
    <ligand>
        <name>Mn(2+)</name>
        <dbReference type="ChEBI" id="CHEBI:29035"/>
        <label>3</label>
    </ligand>
</feature>
<feature type="binding site" evidence="1">
    <location>
        <position position="832"/>
    </location>
    <ligand>
        <name>Mn(2+)</name>
        <dbReference type="ChEBI" id="CHEBI:29035"/>
        <label>4</label>
    </ligand>
</feature>
<feature type="binding site" evidence="1">
    <location>
        <position position="834"/>
    </location>
    <ligand>
        <name>Mg(2+)</name>
        <dbReference type="ChEBI" id="CHEBI:18420"/>
        <label>4</label>
    </ligand>
</feature>
<feature type="binding site" evidence="1">
    <location>
        <position position="834"/>
    </location>
    <ligand>
        <name>Mn(2+)</name>
        <dbReference type="ChEBI" id="CHEBI:29035"/>
        <label>4</label>
    </ligand>
</feature>
<protein>
    <recommendedName>
        <fullName evidence="1">Carbamoyl phosphate synthase large chain</fullName>
        <ecNumber evidence="1">6.3.4.16</ecNumber>
        <ecNumber evidence="1">6.3.5.5</ecNumber>
    </recommendedName>
    <alternativeName>
        <fullName evidence="1">Carbamoyl phosphate synthetase ammonia chain</fullName>
    </alternativeName>
</protein>
<sequence>MPKRLDINTILVIGSGPIVIGQAAEFDYSGTQACQSLKEEGYKVILVNSNPATIMTDTATADKVYIEPLTLEFVSRIIRKERPDAILPTLGGQTGLNMAVELAKSGVLEECGVEILGTKLSAIEQAEDRDLFRTLMQELNEPTPPSEIIHNLDEAYGFVKEIGYPVIVRPAFTLGGTGGGICHNEEELIEIVTSGLKHSPVTQCLLEKSIAGCKEIEYEVMRDSNDNAIVVCNMENIDPVGVHTGDSIVVAPSQTLSDREYQMLRNTSLRIIRALGIEGGCNVQLALDPYSFQYYVIEVNPRVSRSSALASKATGYPIAKLAAKIAVGLTLDEIVNPVTQKTYACFEPALDYVVSKIPRWPFDKFESANRTLGTQMKATGEVMSIGRNLEESLLKAVRSLELGIYHLELDHLKELDKETMKKRIIKADDERLFIVAEAIRQGVTKEEINEWCEMDFFFLQKVENIVNMEREVKANVGNMEVLQTAKEMGFSDHYIAAAWNKTEREIYDMRKENNMTPVFKMVDTCAAEFESATPYYYSTYADENESIVTDRKSVVVLGSGPIRIGQGVEFDYATVHSVWAIKEAGYEAIIINNNPETVSTDFSISDKLYFEPLTIEDVMHIIDLEKPEGVIVQFGGQTAINLAAKLEEHGVKILGTSLEDLDRAEDRDKFEAALTKLGIPQPVGKTATTVEQAVAIAEEIGYPVLVRPSYVLGGRAMEIVYRQEELLHYMKNAVKVHADHPVLIDRYMVGKEIEVDAISDGENVFIPGIMEHIERAGVHSGDSIGVYPPQSLSEKLKEQIIEHTIALGKGLNIVGLLNIQFVVFEDQVYVIEVNPRASRTVPFLSKITGVPMANVATKVILGQDLVEQGYGTGYHPEEKEVYVKAPVFSFAKLRSVDTTLGPEMKSTGEVMGKDLTLEKALYKGLVASGINIPTHGSVIITVADKDKEEAMEIAKRFHEIGYNLLATAGTAQSLTEQNIPVQVVNKIDSEDYNLLDIIRQGKAQFVINTLTKGKQPARDGFRIRRESVENGVACLTSLDTTRAILRVLESMTFSAHSMKEITQTKRHEVVHA</sequence>
<dbReference type="EC" id="6.3.4.16" evidence="1"/>
<dbReference type="EC" id="6.3.5.5" evidence="1"/>
<dbReference type="EMBL" id="AE017355">
    <property type="protein sequence ID" value="AAT61314.1"/>
    <property type="molecule type" value="Genomic_DNA"/>
</dbReference>
<dbReference type="RefSeq" id="WP_001126116.1">
    <property type="nucleotide sequence ID" value="NC_005957.1"/>
</dbReference>
<dbReference type="RefSeq" id="YP_037948.1">
    <property type="nucleotide sequence ID" value="NC_005957.1"/>
</dbReference>
<dbReference type="SMR" id="Q6HES8"/>
<dbReference type="KEGG" id="btk:BT9727_3628"/>
<dbReference type="PATRIC" id="fig|281309.8.peg.3866"/>
<dbReference type="HOGENOM" id="CLU_000513_1_0_9"/>
<dbReference type="UniPathway" id="UPA00068">
    <property type="reaction ID" value="UER00171"/>
</dbReference>
<dbReference type="UniPathway" id="UPA00070">
    <property type="reaction ID" value="UER00115"/>
</dbReference>
<dbReference type="Proteomes" id="UP000001301">
    <property type="component" value="Chromosome"/>
</dbReference>
<dbReference type="GO" id="GO:0005737">
    <property type="term" value="C:cytoplasm"/>
    <property type="evidence" value="ECO:0007669"/>
    <property type="project" value="TreeGrafter"/>
</dbReference>
<dbReference type="GO" id="GO:0005524">
    <property type="term" value="F:ATP binding"/>
    <property type="evidence" value="ECO:0007669"/>
    <property type="project" value="UniProtKB-UniRule"/>
</dbReference>
<dbReference type="GO" id="GO:0004087">
    <property type="term" value="F:carbamoyl-phosphate synthase (ammonia) activity"/>
    <property type="evidence" value="ECO:0007669"/>
    <property type="project" value="RHEA"/>
</dbReference>
<dbReference type="GO" id="GO:0004088">
    <property type="term" value="F:carbamoyl-phosphate synthase (glutamine-hydrolyzing) activity"/>
    <property type="evidence" value="ECO:0007669"/>
    <property type="project" value="UniProtKB-UniRule"/>
</dbReference>
<dbReference type="GO" id="GO:0046872">
    <property type="term" value="F:metal ion binding"/>
    <property type="evidence" value="ECO:0007669"/>
    <property type="project" value="UniProtKB-KW"/>
</dbReference>
<dbReference type="GO" id="GO:0044205">
    <property type="term" value="P:'de novo' UMP biosynthetic process"/>
    <property type="evidence" value="ECO:0007669"/>
    <property type="project" value="UniProtKB-UniRule"/>
</dbReference>
<dbReference type="GO" id="GO:0006541">
    <property type="term" value="P:glutamine metabolic process"/>
    <property type="evidence" value="ECO:0007669"/>
    <property type="project" value="TreeGrafter"/>
</dbReference>
<dbReference type="GO" id="GO:0006526">
    <property type="term" value="P:L-arginine biosynthetic process"/>
    <property type="evidence" value="ECO:0007669"/>
    <property type="project" value="UniProtKB-UniRule"/>
</dbReference>
<dbReference type="CDD" id="cd01424">
    <property type="entry name" value="MGS_CPS_II"/>
    <property type="match status" value="1"/>
</dbReference>
<dbReference type="FunFam" id="1.10.1030.10:FF:000002">
    <property type="entry name" value="Carbamoyl-phosphate synthase large chain"/>
    <property type="match status" value="1"/>
</dbReference>
<dbReference type="FunFam" id="3.30.1490.20:FF:000001">
    <property type="entry name" value="Carbamoyl-phosphate synthase large chain"/>
    <property type="match status" value="1"/>
</dbReference>
<dbReference type="FunFam" id="3.30.470.20:FF:000001">
    <property type="entry name" value="Carbamoyl-phosphate synthase large chain"/>
    <property type="match status" value="1"/>
</dbReference>
<dbReference type="FunFam" id="3.30.470.20:FF:000026">
    <property type="entry name" value="Carbamoyl-phosphate synthase large chain"/>
    <property type="match status" value="1"/>
</dbReference>
<dbReference type="FunFam" id="3.40.50.1380:FF:000011">
    <property type="entry name" value="Carbamoyl-phosphate synthase large chain"/>
    <property type="match status" value="1"/>
</dbReference>
<dbReference type="FunFam" id="3.40.50.20:FF:000001">
    <property type="entry name" value="Carbamoyl-phosphate synthase large chain"/>
    <property type="match status" value="2"/>
</dbReference>
<dbReference type="Gene3D" id="3.40.50.20">
    <property type="match status" value="2"/>
</dbReference>
<dbReference type="Gene3D" id="3.30.1490.20">
    <property type="entry name" value="ATP-grasp fold, A domain"/>
    <property type="match status" value="1"/>
</dbReference>
<dbReference type="Gene3D" id="3.30.470.20">
    <property type="entry name" value="ATP-grasp fold, B domain"/>
    <property type="match status" value="2"/>
</dbReference>
<dbReference type="Gene3D" id="1.10.1030.10">
    <property type="entry name" value="Carbamoyl-phosphate synthetase, large subunit oligomerisation domain"/>
    <property type="match status" value="1"/>
</dbReference>
<dbReference type="Gene3D" id="3.40.50.1380">
    <property type="entry name" value="Methylglyoxal synthase-like domain"/>
    <property type="match status" value="1"/>
</dbReference>
<dbReference type="HAMAP" id="MF_01210_A">
    <property type="entry name" value="CPSase_L_chain_A"/>
    <property type="match status" value="1"/>
</dbReference>
<dbReference type="HAMAP" id="MF_01210_B">
    <property type="entry name" value="CPSase_L_chain_B"/>
    <property type="match status" value="1"/>
</dbReference>
<dbReference type="InterPro" id="IPR011761">
    <property type="entry name" value="ATP-grasp"/>
</dbReference>
<dbReference type="InterPro" id="IPR013815">
    <property type="entry name" value="ATP_grasp_subdomain_1"/>
</dbReference>
<dbReference type="InterPro" id="IPR006275">
    <property type="entry name" value="CarbamoylP_synth_lsu"/>
</dbReference>
<dbReference type="InterPro" id="IPR005480">
    <property type="entry name" value="CarbamoylP_synth_lsu_oligo"/>
</dbReference>
<dbReference type="InterPro" id="IPR036897">
    <property type="entry name" value="CarbamoylP_synth_lsu_oligo_sf"/>
</dbReference>
<dbReference type="InterPro" id="IPR005479">
    <property type="entry name" value="CbamoylP_synth_lsu-like_ATP-bd"/>
</dbReference>
<dbReference type="InterPro" id="IPR005483">
    <property type="entry name" value="CbamoylP_synth_lsu_CPSase_dom"/>
</dbReference>
<dbReference type="InterPro" id="IPR011607">
    <property type="entry name" value="MGS-like_dom"/>
</dbReference>
<dbReference type="InterPro" id="IPR036914">
    <property type="entry name" value="MGS-like_dom_sf"/>
</dbReference>
<dbReference type="InterPro" id="IPR033937">
    <property type="entry name" value="MGS_CPS_CarB"/>
</dbReference>
<dbReference type="InterPro" id="IPR016185">
    <property type="entry name" value="PreATP-grasp_dom_sf"/>
</dbReference>
<dbReference type="NCBIfam" id="TIGR01369">
    <property type="entry name" value="CPSaseII_lrg"/>
    <property type="match status" value="1"/>
</dbReference>
<dbReference type="NCBIfam" id="NF003671">
    <property type="entry name" value="PRK05294.1"/>
    <property type="match status" value="1"/>
</dbReference>
<dbReference type="NCBIfam" id="NF009455">
    <property type="entry name" value="PRK12815.1"/>
    <property type="match status" value="1"/>
</dbReference>
<dbReference type="PANTHER" id="PTHR11405:SF53">
    <property type="entry name" value="CARBAMOYL-PHOSPHATE SYNTHASE [AMMONIA], MITOCHONDRIAL"/>
    <property type="match status" value="1"/>
</dbReference>
<dbReference type="PANTHER" id="PTHR11405">
    <property type="entry name" value="CARBAMOYLTRANSFERASE FAMILY MEMBER"/>
    <property type="match status" value="1"/>
</dbReference>
<dbReference type="Pfam" id="PF02786">
    <property type="entry name" value="CPSase_L_D2"/>
    <property type="match status" value="2"/>
</dbReference>
<dbReference type="Pfam" id="PF02787">
    <property type="entry name" value="CPSase_L_D3"/>
    <property type="match status" value="1"/>
</dbReference>
<dbReference type="Pfam" id="PF02142">
    <property type="entry name" value="MGS"/>
    <property type="match status" value="1"/>
</dbReference>
<dbReference type="PRINTS" id="PR00098">
    <property type="entry name" value="CPSASE"/>
</dbReference>
<dbReference type="SMART" id="SM01096">
    <property type="entry name" value="CPSase_L_D3"/>
    <property type="match status" value="1"/>
</dbReference>
<dbReference type="SMART" id="SM01209">
    <property type="entry name" value="GARS_A"/>
    <property type="match status" value="1"/>
</dbReference>
<dbReference type="SMART" id="SM00851">
    <property type="entry name" value="MGS"/>
    <property type="match status" value="1"/>
</dbReference>
<dbReference type="SUPFAM" id="SSF48108">
    <property type="entry name" value="Carbamoyl phosphate synthetase, large subunit connection domain"/>
    <property type="match status" value="1"/>
</dbReference>
<dbReference type="SUPFAM" id="SSF56059">
    <property type="entry name" value="Glutathione synthetase ATP-binding domain-like"/>
    <property type="match status" value="2"/>
</dbReference>
<dbReference type="SUPFAM" id="SSF52335">
    <property type="entry name" value="Methylglyoxal synthase-like"/>
    <property type="match status" value="1"/>
</dbReference>
<dbReference type="SUPFAM" id="SSF52440">
    <property type="entry name" value="PreATP-grasp domain"/>
    <property type="match status" value="2"/>
</dbReference>
<dbReference type="PROSITE" id="PS50975">
    <property type="entry name" value="ATP_GRASP"/>
    <property type="match status" value="2"/>
</dbReference>
<dbReference type="PROSITE" id="PS00866">
    <property type="entry name" value="CPSASE_1"/>
    <property type="match status" value="2"/>
</dbReference>
<dbReference type="PROSITE" id="PS00867">
    <property type="entry name" value="CPSASE_2"/>
    <property type="match status" value="2"/>
</dbReference>
<dbReference type="PROSITE" id="PS51855">
    <property type="entry name" value="MGS"/>
    <property type="match status" value="1"/>
</dbReference>
<reference key="1">
    <citation type="journal article" date="2006" name="J. Bacteriol.">
        <title>Pathogenomic sequence analysis of Bacillus cereus and Bacillus thuringiensis isolates closely related to Bacillus anthracis.</title>
        <authorList>
            <person name="Han C.S."/>
            <person name="Xie G."/>
            <person name="Challacombe J.F."/>
            <person name="Altherr M.R."/>
            <person name="Bhotika S.S."/>
            <person name="Bruce D."/>
            <person name="Campbell C.S."/>
            <person name="Campbell M.L."/>
            <person name="Chen J."/>
            <person name="Chertkov O."/>
            <person name="Cleland C."/>
            <person name="Dimitrijevic M."/>
            <person name="Doggett N.A."/>
            <person name="Fawcett J.J."/>
            <person name="Glavina T."/>
            <person name="Goodwin L.A."/>
            <person name="Hill K.K."/>
            <person name="Hitchcock P."/>
            <person name="Jackson P.J."/>
            <person name="Keim P."/>
            <person name="Kewalramani A.R."/>
            <person name="Longmire J."/>
            <person name="Lucas S."/>
            <person name="Malfatti S."/>
            <person name="McMurry K."/>
            <person name="Meincke L.J."/>
            <person name="Misra M."/>
            <person name="Moseman B.L."/>
            <person name="Mundt M."/>
            <person name="Munk A.C."/>
            <person name="Okinaka R.T."/>
            <person name="Parson-Quintana B."/>
            <person name="Reilly L.P."/>
            <person name="Richardson P."/>
            <person name="Robinson D.L."/>
            <person name="Rubin E."/>
            <person name="Saunders E."/>
            <person name="Tapia R."/>
            <person name="Tesmer J.G."/>
            <person name="Thayer N."/>
            <person name="Thompson L.S."/>
            <person name="Tice H."/>
            <person name="Ticknor L.O."/>
            <person name="Wills P.L."/>
            <person name="Brettin T.S."/>
            <person name="Gilna P."/>
        </authorList>
    </citation>
    <scope>NUCLEOTIDE SEQUENCE [LARGE SCALE GENOMIC DNA]</scope>
    <source>
        <strain>97-27</strain>
    </source>
</reference>
<accession>Q6HES8</accession>
<gene>
    <name evidence="1" type="primary">carB</name>
    <name type="ordered locus">BT9727_3628</name>
</gene>